<dbReference type="EC" id="2.5.1.151" evidence="1"/>
<dbReference type="EC" id="1.16.1.6" evidence="1"/>
<dbReference type="EMBL" id="AJ719913">
    <property type="protein sequence ID" value="CAG31572.1"/>
    <property type="molecule type" value="mRNA"/>
</dbReference>
<dbReference type="RefSeq" id="NP_001026452.1">
    <property type="nucleotide sequence ID" value="NM_001031281.1"/>
</dbReference>
<dbReference type="SMR" id="Q5ZL21"/>
<dbReference type="FunCoup" id="Q5ZL21">
    <property type="interactions" value="192"/>
</dbReference>
<dbReference type="STRING" id="9031.ENSGALP00000016616"/>
<dbReference type="PaxDb" id="9031-ENSGALP00000016616"/>
<dbReference type="GeneID" id="424597"/>
<dbReference type="KEGG" id="gga:424597"/>
<dbReference type="CTD" id="25974"/>
<dbReference type="VEuPathDB" id="HostDB:geneid_424597"/>
<dbReference type="eggNOG" id="KOG4552">
    <property type="taxonomic scope" value="Eukaryota"/>
</dbReference>
<dbReference type="InParanoid" id="Q5ZL21"/>
<dbReference type="OrthoDB" id="409189at2759"/>
<dbReference type="PhylomeDB" id="Q5ZL21"/>
<dbReference type="PRO" id="PR:Q5ZL21"/>
<dbReference type="Proteomes" id="UP000000539">
    <property type="component" value="Unassembled WGS sequence"/>
</dbReference>
<dbReference type="GO" id="GO:0005737">
    <property type="term" value="C:cytoplasm"/>
    <property type="evidence" value="ECO:0000318"/>
    <property type="project" value="GO_Central"/>
</dbReference>
<dbReference type="GO" id="GO:0005829">
    <property type="term" value="C:cytosol"/>
    <property type="evidence" value="ECO:0007669"/>
    <property type="project" value="UniProtKB-SubCell"/>
</dbReference>
<dbReference type="GO" id="GO:0031419">
    <property type="term" value="F:cobalamin binding"/>
    <property type="evidence" value="ECO:0007669"/>
    <property type="project" value="UniProtKB-KW"/>
</dbReference>
<dbReference type="GO" id="GO:0033787">
    <property type="term" value="F:cyanocobalamin reductase (cyanide-eliminating) (NADP+) activity"/>
    <property type="evidence" value="ECO:0000250"/>
    <property type="project" value="UniProtKB"/>
</dbReference>
<dbReference type="GO" id="GO:0032451">
    <property type="term" value="F:demethylase activity"/>
    <property type="evidence" value="ECO:0000250"/>
    <property type="project" value="UniProtKB"/>
</dbReference>
<dbReference type="GO" id="GO:0071949">
    <property type="term" value="F:FAD binding"/>
    <property type="evidence" value="ECO:0000250"/>
    <property type="project" value="UniProtKB"/>
</dbReference>
<dbReference type="GO" id="GO:0043295">
    <property type="term" value="F:glutathione binding"/>
    <property type="evidence" value="ECO:0000250"/>
    <property type="project" value="UniProtKB"/>
</dbReference>
<dbReference type="GO" id="GO:0016491">
    <property type="term" value="F:oxidoreductase activity"/>
    <property type="evidence" value="ECO:0000250"/>
    <property type="project" value="UniProtKB"/>
</dbReference>
<dbReference type="GO" id="GO:0016740">
    <property type="term" value="F:transferase activity"/>
    <property type="evidence" value="ECO:0007669"/>
    <property type="project" value="UniProtKB-KW"/>
</dbReference>
<dbReference type="GO" id="GO:0009235">
    <property type="term" value="P:cobalamin metabolic process"/>
    <property type="evidence" value="ECO:0000250"/>
    <property type="project" value="UniProtKB"/>
</dbReference>
<dbReference type="GO" id="GO:0070988">
    <property type="term" value="P:demethylation"/>
    <property type="evidence" value="ECO:0000250"/>
    <property type="project" value="UniProtKB"/>
</dbReference>
<dbReference type="GO" id="GO:0006749">
    <property type="term" value="P:glutathione metabolic process"/>
    <property type="evidence" value="ECO:0000250"/>
    <property type="project" value="UniProtKB"/>
</dbReference>
<dbReference type="CDD" id="cd12959">
    <property type="entry name" value="MMACHC-like"/>
    <property type="match status" value="1"/>
</dbReference>
<dbReference type="InterPro" id="IPR032037">
    <property type="entry name" value="MMACHC"/>
</dbReference>
<dbReference type="PANTHER" id="PTHR31457:SF2">
    <property type="entry name" value="CYANOCOBALAMIN REDUCTASE _ ALKYLCOBALAMIN DEALKYLASE"/>
    <property type="match status" value="1"/>
</dbReference>
<dbReference type="PANTHER" id="PTHR31457">
    <property type="entry name" value="METHYLMALONIC ACIDURIA AND HOMOCYSTINURIA TYPE C PROTEIN"/>
    <property type="match status" value="1"/>
</dbReference>
<dbReference type="Pfam" id="PF16690">
    <property type="entry name" value="MMACHC"/>
    <property type="match status" value="1"/>
</dbReference>
<proteinExistence type="evidence at transcript level"/>
<accession>Q5ZL21</accession>
<name>MMAC_CHICK</name>
<evidence type="ECO:0000250" key="1">
    <source>
        <dbReference type="UniProtKB" id="Q9Y4U1"/>
    </source>
</evidence>
<evidence type="ECO:0000305" key="2"/>
<keyword id="KW-0846">Cobalamin</keyword>
<keyword id="KW-0170">Cobalt</keyword>
<keyword id="KW-0963">Cytoplasm</keyword>
<keyword id="KW-0274">FAD</keyword>
<keyword id="KW-0285">Flavoprotein</keyword>
<keyword id="KW-0288">FMN</keyword>
<keyword id="KW-0521">NADP</keyword>
<keyword id="KW-0560">Oxidoreductase</keyword>
<keyword id="KW-0597">Phosphoprotein</keyword>
<keyword id="KW-1185">Reference proteome</keyword>
<keyword id="KW-0808">Transferase</keyword>
<sequence length="238" mass="27637">MEERVAERLHGALGPLGFEVHAFKVGWYNAVLQPAFHLPYPDDTLAFVVLSTPSMFDKALKPFVNKERLKIIRDPVDQCVSHHLSSVKEIFPDQKVDVIFDYEILPSRRPKFLAQTAAHVAGAAYYYQRKDVKLDPWGEKKIFGVCIHPKYGGWFAIRGLLLFPDVQVPFLEQSAPVDCVSTEEKRTELLELFNFHWQDGRYRDIIEVKERYSEEQKTYFSTPPAERFRLLGLTRFTE</sequence>
<reference key="1">
    <citation type="journal article" date="2005" name="Genome Biol.">
        <title>Full-length cDNAs from chicken bursal lymphocytes to facilitate gene function analysis.</title>
        <authorList>
            <person name="Caldwell R.B."/>
            <person name="Kierzek A.M."/>
            <person name="Arakawa H."/>
            <person name="Bezzubov Y."/>
            <person name="Zaim J."/>
            <person name="Fiedler P."/>
            <person name="Kutter S."/>
            <person name="Blagodatski A."/>
            <person name="Kostovska D."/>
            <person name="Koter M."/>
            <person name="Plachy J."/>
            <person name="Carninci P."/>
            <person name="Hayashizaki Y."/>
            <person name="Buerstedde J.-M."/>
        </authorList>
    </citation>
    <scope>NUCLEOTIDE SEQUENCE [LARGE SCALE MRNA]</scope>
    <source>
        <strain>CB</strain>
        <tissue>Bursa of Fabricius</tissue>
    </source>
</reference>
<comment type="function">
    <text evidence="1">Cobalamin (vitamin B12) cytosolic chaperone that catalyzes the reductive decyanation of cyanocob(III)alamin (cyanocobalamin, CNCbl) to yield cob(II)alamin and cyanide, using FAD or FMN as cofactors and NADPH as cosubstrate. Cyanocobalamin constitutes the inactive form of vitamin B12 introduced from the diet, and is converted into the active cofactors methylcobalamin (MeCbl) involved in methionine biosynthesis, and 5'-deoxyadenosylcobalamin (AdoCbl) involved in the TCA cycle. Forms a complex with the lysosomal transporter ABCD4 and its chaperone LMBRD1, to transport cobalamin across the lysosomal membrane into the cytosol. The processing of cobalamin in the cytosol occurs in a multiprotein complex composed of at least MMACHC, MMADHC, MTRR (methionine synthase reductase) and MTR (methionine synthase) which may contribute to shuttle safely and efficiently cobalamin towards MTR in order to produce methionine. Also acts as a glutathione transferase by catalyzing the dealkylation of the alkylcob(III)alamins MeCbl and AdoCbl, using the thiolate of glutathione for nucleophilic displacement to generate cob(I)alamin and the corresponding glutathione thioether. The conversion of incoming MeCbl or AdoCbl into a common intermediate cob(I)alamin is necessary to meet the cellular needs for both cofactors. Cysteine and homocysteine cannot substitute for glutathione in this reaction.</text>
</comment>
<comment type="catalytic activity">
    <reaction evidence="1">
        <text>2 cob(II)alamin-[cyanocobalamin reductase] + 2 hydrogen cyanide + NADP(+) = 2 cyanocob(III)alamin + 2 apo-[cyanocobalamin reductase] + NADPH + H(+)</text>
        <dbReference type="Rhea" id="RHEA:16113"/>
        <dbReference type="Rhea" id="RHEA-COMP:14717"/>
        <dbReference type="Rhea" id="RHEA-COMP:14718"/>
        <dbReference type="ChEBI" id="CHEBI:15378"/>
        <dbReference type="ChEBI" id="CHEBI:16304"/>
        <dbReference type="ChEBI" id="CHEBI:17439"/>
        <dbReference type="ChEBI" id="CHEBI:18407"/>
        <dbReference type="ChEBI" id="CHEBI:57783"/>
        <dbReference type="ChEBI" id="CHEBI:58349"/>
        <dbReference type="ChEBI" id="CHEBI:83228"/>
        <dbReference type="EC" id="1.16.1.6"/>
    </reaction>
    <physiologicalReaction direction="right-to-left" evidence="1">
        <dbReference type="Rhea" id="RHEA:16115"/>
    </physiologicalReaction>
</comment>
<comment type="catalytic activity">
    <reaction evidence="1">
        <text>apo-[alkylcobalamin reductase] + an R-cob(III)alamin + glutathione = cob(I)alamin-[alkylcobalamin reductase] + an S-substituted glutathione + H(+)</text>
        <dbReference type="Rhea" id="RHEA:40719"/>
        <dbReference type="Rhea" id="RHEA-COMP:14730"/>
        <dbReference type="Rhea" id="RHEA-COMP:14731"/>
        <dbReference type="ChEBI" id="CHEBI:15378"/>
        <dbReference type="ChEBI" id="CHEBI:57925"/>
        <dbReference type="ChEBI" id="CHEBI:60488"/>
        <dbReference type="ChEBI" id="CHEBI:83228"/>
        <dbReference type="ChEBI" id="CHEBI:90779"/>
        <dbReference type="ChEBI" id="CHEBI:140785"/>
        <dbReference type="EC" id="2.5.1.151"/>
    </reaction>
    <physiologicalReaction direction="left-to-right" evidence="1">
        <dbReference type="Rhea" id="RHEA:40720"/>
    </physiologicalReaction>
</comment>
<comment type="catalytic activity">
    <reaction evidence="1">
        <text>apo-[alkylcobalamin reductase] + methylcob(III)alamin + glutathione = S-methyl glutathione + cob(I)alamin-[alkylcobalamin reductase] + H(+)</text>
        <dbReference type="Rhea" id="RHEA:63132"/>
        <dbReference type="Rhea" id="RHEA-COMP:14730"/>
        <dbReference type="Rhea" id="RHEA-COMP:14731"/>
        <dbReference type="ChEBI" id="CHEBI:15378"/>
        <dbReference type="ChEBI" id="CHEBI:28115"/>
        <dbReference type="ChEBI" id="CHEBI:57925"/>
        <dbReference type="ChEBI" id="CHEBI:60488"/>
        <dbReference type="ChEBI" id="CHEBI:83228"/>
        <dbReference type="ChEBI" id="CHEBI:141467"/>
        <dbReference type="EC" id="2.5.1.151"/>
    </reaction>
    <physiologicalReaction direction="left-to-right" evidence="1">
        <dbReference type="Rhea" id="RHEA:63133"/>
    </physiologicalReaction>
</comment>
<comment type="catalytic activity">
    <reaction evidence="1">
        <text>apo-[alkylcobalamin reductase] + adenosylcob(III)alamin + glutathione = S-adenosylglutathione + cob(I)alamin-[alkylcobalamin reductase] + H(+)</text>
        <dbReference type="Rhea" id="RHEA:63136"/>
        <dbReference type="Rhea" id="RHEA-COMP:14730"/>
        <dbReference type="Rhea" id="RHEA-COMP:14731"/>
        <dbReference type="ChEBI" id="CHEBI:15378"/>
        <dbReference type="ChEBI" id="CHEBI:18408"/>
        <dbReference type="ChEBI" id="CHEBI:57925"/>
        <dbReference type="ChEBI" id="CHEBI:60488"/>
        <dbReference type="ChEBI" id="CHEBI:83228"/>
        <dbReference type="ChEBI" id="CHEBI:146184"/>
        <dbReference type="EC" id="2.5.1.151"/>
    </reaction>
    <physiologicalReaction direction="left-to-right" evidence="1">
        <dbReference type="Rhea" id="RHEA:63137"/>
    </physiologicalReaction>
</comment>
<comment type="cofactor">
    <cofactor evidence="1">
        <name>FAD</name>
        <dbReference type="ChEBI" id="CHEBI:57692"/>
    </cofactor>
    <cofactor evidence="1">
        <name>FMN</name>
        <dbReference type="ChEBI" id="CHEBI:58210"/>
    </cofactor>
    <text evidence="1">Can utilize both FAD and FMN.</text>
</comment>
<comment type="subunit">
    <text evidence="1">Monomer in the absence of bound substrate. Homodimer; dimerization is triggered by binding to FMN or adenosylcobalamin. Heterodimer with MMADHC.</text>
</comment>
<comment type="subcellular location">
    <subcellularLocation>
        <location evidence="1">Cytoplasm</location>
        <location evidence="1">Cytosol</location>
    </subcellularLocation>
</comment>
<comment type="similarity">
    <text evidence="2">Belongs to the MMACHC family.</text>
</comment>
<organism>
    <name type="scientific">Gallus gallus</name>
    <name type="common">Chicken</name>
    <dbReference type="NCBI Taxonomy" id="9031"/>
    <lineage>
        <taxon>Eukaryota</taxon>
        <taxon>Metazoa</taxon>
        <taxon>Chordata</taxon>
        <taxon>Craniata</taxon>
        <taxon>Vertebrata</taxon>
        <taxon>Euteleostomi</taxon>
        <taxon>Archelosauria</taxon>
        <taxon>Archosauria</taxon>
        <taxon>Dinosauria</taxon>
        <taxon>Saurischia</taxon>
        <taxon>Theropoda</taxon>
        <taxon>Coelurosauria</taxon>
        <taxon>Aves</taxon>
        <taxon>Neognathae</taxon>
        <taxon>Galloanserae</taxon>
        <taxon>Galliformes</taxon>
        <taxon>Phasianidae</taxon>
        <taxon>Phasianinae</taxon>
        <taxon>Gallus</taxon>
    </lineage>
</organism>
<feature type="chain" id="PRO_0000076260" description="Cyanocobalamin reductase / alkylcobalamin dealkylase">
    <location>
        <begin position="1"/>
        <end position="238"/>
    </location>
</feature>
<feature type="binding site" evidence="1">
    <location>
        <position position="101"/>
    </location>
    <ligand>
        <name>substrate</name>
    </ligand>
</feature>
<feature type="binding site" evidence="1">
    <location>
        <begin position="112"/>
        <end position="115"/>
    </location>
    <ligand>
        <name>substrate</name>
    </ligand>
</feature>
<feature type="binding site" evidence="1">
    <location>
        <begin position="126"/>
        <end position="128"/>
    </location>
    <ligand>
        <name>substrate</name>
    </ligand>
</feature>
<feature type="binding site" evidence="1">
    <location>
        <position position="146"/>
    </location>
    <ligand>
        <name>substrate</name>
    </ligand>
</feature>
<feature type="binding site" evidence="1">
    <location>
        <position position="157"/>
    </location>
    <ligand>
        <name>substrate</name>
    </ligand>
</feature>
<protein>
    <recommendedName>
        <fullName>Cyanocobalamin reductase / alkylcobalamin dealkylase</fullName>
    </recommendedName>
    <alternativeName>
        <fullName>Alkylcobalamin:glutathione S-alkyltransferase</fullName>
        <ecNumber evidence="1">2.5.1.151</ecNumber>
    </alternativeName>
    <alternativeName>
        <fullName>CblC</fullName>
    </alternativeName>
    <alternativeName>
        <fullName>Cyanocobalamin reductase (cyanide-eliminating)</fullName>
        <ecNumber evidence="1">1.16.1.6</ecNumber>
    </alternativeName>
    <alternativeName>
        <fullName>Methylmalonic aciduria and homocystinuria type C protein</fullName>
        <shortName>MMACHC</shortName>
    </alternativeName>
</protein>
<gene>
    <name type="primary">MMACHC</name>
    <name type="ORF">RCJMB04_8d5</name>
</gene>